<gene>
    <name type="primary">Gfi1</name>
    <name type="synonym">Gfi-1</name>
</gene>
<keyword id="KW-0238">DNA-binding</keyword>
<keyword id="KW-0479">Metal-binding</keyword>
<keyword id="KW-0539">Nucleus</keyword>
<keyword id="KW-0597">Phosphoprotein</keyword>
<keyword id="KW-1185">Reference proteome</keyword>
<keyword id="KW-0677">Repeat</keyword>
<keyword id="KW-0804">Transcription</keyword>
<keyword id="KW-0805">Transcription regulation</keyword>
<keyword id="KW-0832">Ubl conjugation</keyword>
<keyword id="KW-0862">Zinc</keyword>
<keyword id="KW-0863">Zinc-finger</keyword>
<proteinExistence type="evidence at protein level"/>
<comment type="function">
    <text evidence="3 6 7 8 9 10 11 12">Transcription repressor essential for hematopoiesis (PubMed:8622900). Functions in a cell-context and development-specific manner (By similarity). Binds to 5'-TAAATCAC[AT]GCA-3' in the promoter region of a large number of genes (By similarity). Component of several complexes, including the EHMT2-GFI1-HDAC1, AJUBA-GFI1-HDAC1 and RCOR-GFI-KDM1A-HDAC complexes, that suppress, via histone deacetylase (HDAC) recruitment, a number of genes implicated in multilineage blood cell development (PubMed:17707228). Regulates neutrophil differentiation, promotes proliferation of lymphoid cells, and is required for granulocyte development (PubMed:17197705). Inhibits SPI1 transcriptional activity at macrophage-specific genes, repressing macrophage differentiation of myeloid progenitor cells and promoting granulocyte commitment (PubMed:17197705). Mediates, together with U2AF1L4, the alternative splicing of CD45 and controls T-cell receptor signaling (PubMed:16819553). Regulates the endotoxin-mediated Toll-like receptor (TLR) inflammatory response by antagonizing RELA (PubMed:20547752). Cooperates with CBFA2T2 to regulate ITGB1-dependent neurite growth (By similarity). Controls cell-cycle progression by repressing CDKNIA/p21 transcription in response to TGFB1 via recruitment of GFI1 by ZBTB17 to the CDKNIA/p21 and CDKNIB promoters (By similarity). Required for the maintenance of inner ear hair cells (PubMed:12441305). In addition to its role in transcription, acts as a substrate adapter for PRMT1 in the DNA damage response (PubMed:29651020). Facilitates the recognition of TP53BP1 and MRE11 substrates by PRMT1, promoting their methylation and the DNA damage response (By similarity).</text>
</comment>
<comment type="subunit">
    <text evidence="1 7 8 9">Interacts (via the zinc-finger domain) with ARIH2; the interaction prevents GFI1 ubiquitination and proteasomal degradation. Forms a complex with EHMT2 and HDAC1 to promote 'Lys-9' dimethylation of H3 (H3K9Me2) and repress expression of target genes. Interacts directly with EHMT2. Interacts with RUNX1T1; the interaction represses HDAC-mediated transcriptional activity. Interacts (via the C-terminal zinc fingers) with ZBTB17; the interaction results in the recruitment of GFI1 to the CDKN1A/p21 and CDKNIB promoters and repression of transcription (By similarity). Interacts with U2AF1L4. Component of RCOR-GFI-KDM1A-HDAC complexes. Interacts directly with RCOR1, KDM1A and HDAC2. Also interacts with HDAC1. Component of the GFI1-AJUBA-HDAC1 repressor complex. Interacts directly with AJUBA (via its LIM domains); the interaction results in the HDAC-dependent corepression of a subset of GFI1 target genes and, occurs independently of the SNAG domain. Interacts with SPI1; the interaction inhibits SPI1 transcriptional activity targeted at macrophage-specific genes, repressing macrophage differentiation of myeloid progenitor cells and promoting granulocyte commitment (PubMed:17197705). Interacts with PIAS3; the interaction relieves the inhibitory effect of PIAS3 on STAT3-mediated transcriptional activity. Interacts with RELA; the interaction occurs on liposaccharide (LPS) stimulation and controls RELA DNA binding activity and regulates endotoxin-mediated TOLL-like receptor inflammatory response.</text>
</comment>
<comment type="interaction">
    <interactant intactId="EBI-3954754">
        <id>P70338</id>
    </interactant>
    <interactant intactId="EBI-639217">
        <id>Q9QWF0</id>
        <label>Chaf1a</label>
    </interactant>
    <organismsDiffer>false</organismsDiffer>
    <experiments>5</experiments>
</comment>
<comment type="interaction">
    <interactant intactId="EBI-3954754">
        <id>P70338</id>
    </interactant>
    <interactant intactId="EBI-927969">
        <id>O54714</id>
        <label>Pias3</label>
    </interactant>
    <organismsDiffer>false</organismsDiffer>
    <experiments>6</experiments>
</comment>
<comment type="interaction">
    <interactant intactId="EBI-3954754">
        <id>P70338</id>
    </interactant>
    <interactant intactId="EBI-607588">
        <id>P17433</id>
        <label>Spi1</label>
    </interactant>
    <organismsDiffer>false</organismsDiffer>
    <experiments>2</experiments>
</comment>
<comment type="interaction">
    <interactant intactId="EBI-3954754">
        <id>P70338</id>
    </interactant>
    <interactant intactId="EBI-4288480">
        <id>Q8BGJ9</id>
        <label>U2af1l4</label>
    </interactant>
    <organismsDiffer>false</organismsDiffer>
    <experiments>5</experiments>
</comment>
<comment type="interaction">
    <interactant intactId="EBI-3954754">
        <id>P70338</id>
    </interactant>
    <interactant intactId="EBI-913209">
        <id>P14921</id>
        <label>ETS1</label>
    </interactant>
    <organismsDiffer>true</organismsDiffer>
    <experiments>2</experiments>
</comment>
<comment type="subcellular location">
    <subcellularLocation>
        <location>Nucleus</location>
    </subcellularLocation>
    <text evidence="1">Colocalizes with PIAS3 and RUNX1T1 in nuclear dots.</text>
</comment>
<comment type="induction">
    <text evidence="10">By IL2 and CSF3. Induced by the endotoxin bacterial lipopolysaccharide (LPS) in primary bone marrow macrophages (BMDMs).</text>
</comment>
<comment type="domain">
    <text evidence="1">Zinc fingers 3,4 and 5 are required for DNA binding and for interaction with SPI1.</text>
</comment>
<comment type="domain">
    <text evidence="8 13">The SNAG domain of GFIs is required for nuclear location and for interaction with some corepressors.</text>
</comment>
<comment type="PTM">
    <text evidence="1">Ubiquitinated.</text>
</comment>
<comment type="disruption phenotype">
    <text evidence="6 8">Null mice exhibit neutropenia, characterized by absence of neutrophils. This results in growth retardation, susceptibility to bacterial infection and early lethality. Immature granulocytes and macrophage precursors accumulate in bone marrow. Mice have inner ear anomalies, as they are ataxic, circle, display head tilting behavior and do not respond to noise. In the inner ear, hair cells are disorganized in both vestibule and cochlea. Outer hair cells of the cochlea are initially improperly innervated, and just before birth, mice lose all cochlear hair cells due to apoptosis. By 5 months there is a dramatic reduction in the number of cochlear neurons.</text>
</comment>
<reference key="1">
    <citation type="journal article" date="1997" name="J. Virol.">
        <title>Characterization of pal-1, a common proviral insertion site in murine leukemia virus-induced lymphomas of c-myc and Pim-1 transgenic mice.</title>
        <authorList>
            <person name="Scheijen B."/>
            <person name="Jonkers J."/>
            <person name="Acton D."/>
            <person name="Berns A."/>
        </authorList>
    </citation>
    <scope>NUCLEOTIDE SEQUENCE [MRNA]</scope>
    <source>
        <strain>BALB/cJ</strain>
        <tissue>Thymus</tissue>
    </source>
</reference>
<reference key="2">
    <citation type="journal article" date="1996" name="Oncogene">
        <title>Zinc finger protein GFI-1 cooperates with myc and pim-1 in T-cell lymphomagenesis by reducing the requirements for IL-2.</title>
        <authorList>
            <person name="Zornig M."/>
            <person name="Schmidt T."/>
            <person name="Karsunky H."/>
            <person name="Grzeschiczek A."/>
            <person name="Moroy T."/>
        </authorList>
    </citation>
    <scope>NUCLEOTIDE SEQUENCE [MRNA]</scope>
    <scope>FUNCTION</scope>
</reference>
<reference key="3">
    <citation type="journal article" date="2009" name="PLoS Biol.">
        <title>Lineage-specific biology revealed by a finished genome assembly of the mouse.</title>
        <authorList>
            <person name="Church D.M."/>
            <person name="Goodstadt L."/>
            <person name="Hillier L.W."/>
            <person name="Zody M.C."/>
            <person name="Goldstein S."/>
            <person name="She X."/>
            <person name="Bult C.J."/>
            <person name="Agarwala R."/>
            <person name="Cherry J.L."/>
            <person name="DiCuccio M."/>
            <person name="Hlavina W."/>
            <person name="Kapustin Y."/>
            <person name="Meric P."/>
            <person name="Maglott D."/>
            <person name="Birtle Z."/>
            <person name="Marques A.C."/>
            <person name="Graves T."/>
            <person name="Zhou S."/>
            <person name="Teague B."/>
            <person name="Potamousis K."/>
            <person name="Churas C."/>
            <person name="Place M."/>
            <person name="Herschleb J."/>
            <person name="Runnheim R."/>
            <person name="Forrest D."/>
            <person name="Amos-Landgraf J."/>
            <person name="Schwartz D.C."/>
            <person name="Cheng Z."/>
            <person name="Lindblad-Toh K."/>
            <person name="Eichler E.E."/>
            <person name="Ponting C.P."/>
        </authorList>
    </citation>
    <scope>NUCLEOTIDE SEQUENCE [LARGE SCALE GENOMIC DNA]</scope>
    <source>
        <strain>C57BL/6J</strain>
    </source>
</reference>
<reference key="4">
    <citation type="journal article" date="1996" name="Mol. Cell. Biol.">
        <title>The Gfi-1 proto-oncoprotein contains a novel transcriptional repressor domain, SNAG, and inhibits G1 arrest induced by interleukin-2 withdrawal.</title>
        <authorList>
            <person name="Grimes H.L."/>
            <person name="Chan T.O."/>
            <person name="Zweidler-McKay P.A."/>
            <person name="Tong B."/>
            <person name="Tsichlis P.N."/>
        </authorList>
    </citation>
    <scope>DOMAIN SNAG</scope>
    <scope>MUTAGENESIS OF PRO-2; ARG-3; SER-4; LYS-10 AND LYS-11</scope>
</reference>
<reference key="5">
    <citation type="journal article" date="2003" name="Development">
        <title>The zinc finger transcription factor Gfi1, implicated in lymphomagenesis, is required for inner ear hair cell differentiation and survival.</title>
        <authorList>
            <person name="Wallis D."/>
            <person name="Hamblen M."/>
            <person name="Zhou Y."/>
            <person name="Venken K.J."/>
            <person name="Schumacher A."/>
            <person name="Grimes H.L."/>
            <person name="Zoghbi H.Y."/>
            <person name="Orkin S.H."/>
            <person name="Bellen H.J."/>
        </authorList>
    </citation>
    <scope>DISRUPTION PHENOTYPE</scope>
    <scope>FUNCTION</scope>
</reference>
<reference key="6">
    <citation type="journal article" date="2006" name="Nat. Immunol.">
        <title>Auxiliary splice factor U2AF26 and transcription factor Gfi1 cooperate directly in regulating CD45 alternative splicing.</title>
        <authorList>
            <person name="Heyd F."/>
            <person name="ten Dam G."/>
            <person name="Moeroey T."/>
        </authorList>
    </citation>
    <scope>FUNCTION</scope>
    <scope>INTERACTION WITH U2AF1L4</scope>
</reference>
<reference key="7">
    <citation type="journal article" date="2007" name="J. Biol. Chem.">
        <title>The transcriptional repressor GFI-1 antagonizes PU.1 activity through protein-protein interaction.</title>
        <authorList>
            <person name="Dahl R."/>
            <person name="Iyer S.R."/>
            <person name="Owens K.S."/>
            <person name="Cuylear D.D."/>
            <person name="Simon M.C."/>
        </authorList>
    </citation>
    <scope>INTERACTION WITH SPI1</scope>
    <scope>DOMAIN ZINC-FINGER</scope>
    <scope>FUNCTION</scope>
    <scope>DISRUPTION PHENOTYPE</scope>
</reference>
<reference key="8">
    <citation type="journal article" date="2007" name="Mol. Cell">
        <title>Epigenetic regulation of hematopoietic differentiation by Gfi-1 and Gfi-1b is mediated by the cofactors CoREST and LSD1.</title>
        <authorList>
            <person name="Saleque S."/>
            <person name="Kim J."/>
            <person name="Rooke H.M."/>
            <person name="Orkin S.H."/>
        </authorList>
    </citation>
    <scope>IDENTIFICATION AS A COMPONENT OF A GFI-COR-KDM1A-HDAC COMPLEX</scope>
    <scope>INTERACTION WITH RCOR1; HDAC1; HDAC2 AND KDM1A</scope>
    <scope>FUNCTION</scope>
</reference>
<reference key="9">
    <citation type="journal article" date="2010" name="Mol. Cell. Biol.">
        <title>Zinc finger protein Gfi1 controls the endotoxin-mediated Toll-like receptor inflammatory response by antagonizing NF-kappaB p65.</title>
        <authorList>
            <person name="Sharif-Askari E."/>
            <person name="Vassen L."/>
            <person name="Kosan C."/>
            <person name="Khandanpour C."/>
            <person name="Gaudreau M.C."/>
            <person name="Heyd F."/>
            <person name="Okayama T."/>
            <person name="Jin J."/>
            <person name="Rojas M.E."/>
            <person name="Grimes H.L."/>
            <person name="Zeng H."/>
            <person name="Moroy T."/>
        </authorList>
    </citation>
    <scope>INDUCTION</scope>
    <scope>FUNCTION</scope>
</reference>
<reference key="10">
    <citation type="journal article" date="2018" name="Nat. Commun.">
        <title>GFI1 facilitates efficient DNA repair by regulating PRMT1 dependent methylation of MRE11 and 53BP1.</title>
        <authorList>
            <person name="Vadnais C."/>
            <person name="Chen R."/>
            <person name="Fraszczak J."/>
            <person name="Yu Z."/>
            <person name="Boulais J."/>
            <person name="Pinder J."/>
            <person name="Frank D."/>
            <person name="Khandanpour C."/>
            <person name="Hebert J."/>
            <person name="Dellaire G."/>
            <person name="Cote J.F."/>
            <person name="Richard S."/>
            <person name="Orthwein A."/>
            <person name="Drobetsky E."/>
            <person name="Moeroey T."/>
        </authorList>
    </citation>
    <scope>FUNCTION</scope>
</reference>
<accession>P70338</accession>
<accession>O09063</accession>
<name>GFI1_MOUSE</name>
<feature type="chain" id="PRO_0000047194" description="Zinc finger protein Gfi-1">
    <location>
        <begin position="1"/>
        <end position="423"/>
    </location>
</feature>
<feature type="zinc finger region" description="C2H2-type 1" evidence="4">
    <location>
        <begin position="256"/>
        <end position="279"/>
    </location>
</feature>
<feature type="zinc finger region" description="C2H2-type 2" evidence="4">
    <location>
        <begin position="285"/>
        <end position="307"/>
    </location>
</feature>
<feature type="zinc finger region" description="C2H2-type 3" evidence="4">
    <location>
        <begin position="313"/>
        <end position="335"/>
    </location>
</feature>
<feature type="zinc finger region" description="C2H2-type 4" evidence="4">
    <location>
        <begin position="341"/>
        <end position="363"/>
    </location>
</feature>
<feature type="zinc finger region" description="C2H2-type 5" evidence="4">
    <location>
        <begin position="369"/>
        <end position="391"/>
    </location>
</feature>
<feature type="zinc finger region" description="C2H2-type 6" evidence="4">
    <location>
        <begin position="397"/>
        <end position="420"/>
    </location>
</feature>
<feature type="region of interest" description="Disordered" evidence="5">
    <location>
        <begin position="1"/>
        <end position="76"/>
    </location>
</feature>
<feature type="region of interest" description="SNAG domain">
    <location>
        <begin position="1"/>
        <end position="20"/>
    </location>
</feature>
<feature type="region of interest" description="Required for interaction with RELA" evidence="1">
    <location>
        <begin position="141"/>
        <end position="258"/>
    </location>
</feature>
<feature type="compositionally biased region" description="Basic and acidic residues" evidence="5">
    <location>
        <begin position="48"/>
        <end position="57"/>
    </location>
</feature>
<feature type="modified residue" description="Phosphoserine" evidence="2">
    <location>
        <position position="20"/>
    </location>
</feature>
<feature type="modified residue" description="Phosphoserine" evidence="2">
    <location>
        <position position="57"/>
    </location>
</feature>
<feature type="mutagenesis site" description="Abrogates transcriptional repression. No change in nuclear location." evidence="13">
    <original>P</original>
    <variation>A</variation>
    <location>
        <position position="2"/>
    </location>
</feature>
<feature type="mutagenesis site" description="Partial loss of transcription repression. No change in nuclear location." evidence="13">
    <original>R</original>
    <variation>A</variation>
    <location>
        <position position="3"/>
    </location>
</feature>
<feature type="mutagenesis site" description="Partial loss of transcription repression. No change in nuclear location." evidence="13">
    <original>S</original>
    <variation>A</variation>
    <location>
        <position position="4"/>
    </location>
</feature>
<feature type="mutagenesis site" description="Abolishes most of the nuclear localization and reduces transcriptional repressor activity; when associated with A-11." evidence="13">
    <original>K</original>
    <variation>A</variation>
    <location>
        <position position="10"/>
    </location>
</feature>
<feature type="mutagenesis site" description="Abolishes most of the nuclear localization and reduces transcriptional repressor activity; when associated with A-10." evidence="13">
    <original>K</original>
    <variation>A</variation>
    <location>
        <position position="11"/>
    </location>
</feature>
<feature type="sequence conflict" description="In Ref. 1; AAC52959 and 2; AAB36829." evidence="14" ref="1 2">
    <original>R</original>
    <variation>S</variation>
    <location>
        <position position="185"/>
    </location>
</feature>
<dbReference type="EMBL" id="U58973">
    <property type="protein sequence ID" value="AAC52960.1"/>
    <property type="molecule type" value="mRNA"/>
</dbReference>
<dbReference type="EMBL" id="U58972">
    <property type="protein sequence ID" value="AAC52959.1"/>
    <property type="molecule type" value="mRNA"/>
</dbReference>
<dbReference type="EMBL" id="U78312">
    <property type="protein sequence ID" value="AAB36829.1"/>
    <property type="molecule type" value="mRNA"/>
</dbReference>
<dbReference type="EMBL" id="AC117574">
    <property type="status" value="NOT_ANNOTATED_CDS"/>
    <property type="molecule type" value="Genomic_DNA"/>
</dbReference>
<dbReference type="CCDS" id="CCDS57371.1"/>
<dbReference type="RefSeq" id="NP_034408.1">
    <property type="nucleotide sequence ID" value="NM_010278.2"/>
</dbReference>
<dbReference type="RefSeq" id="XP_006534854.2">
    <property type="nucleotide sequence ID" value="XM_006534791.2"/>
</dbReference>
<dbReference type="RefSeq" id="XP_006534855.1">
    <property type="nucleotide sequence ID" value="XM_006534792.1"/>
</dbReference>
<dbReference type="RefSeq" id="XP_006534856.1">
    <property type="nucleotide sequence ID" value="XM_006534793.3"/>
</dbReference>
<dbReference type="RefSeq" id="XP_006534857.1">
    <property type="nucleotide sequence ID" value="XM_006534794.1"/>
</dbReference>
<dbReference type="RefSeq" id="XP_011247711.1">
    <property type="nucleotide sequence ID" value="XM_011249409.2"/>
</dbReference>
<dbReference type="SMR" id="P70338"/>
<dbReference type="BioGRID" id="199900">
    <property type="interactions" value="2"/>
</dbReference>
<dbReference type="FunCoup" id="P70338">
    <property type="interactions" value="606"/>
</dbReference>
<dbReference type="IntAct" id="P70338">
    <property type="interactions" value="13"/>
</dbReference>
<dbReference type="STRING" id="10090.ENSMUSP00000135039"/>
<dbReference type="iPTMnet" id="P70338"/>
<dbReference type="PhosphoSitePlus" id="P70338"/>
<dbReference type="jPOST" id="P70338"/>
<dbReference type="PaxDb" id="10090-ENSMUSP00000135884"/>
<dbReference type="ProteomicsDB" id="272956"/>
<dbReference type="DNASU" id="14581"/>
<dbReference type="GeneID" id="14581"/>
<dbReference type="KEGG" id="mmu:14581"/>
<dbReference type="AGR" id="MGI:103170"/>
<dbReference type="CTD" id="2672"/>
<dbReference type="MGI" id="MGI:103170">
    <property type="gene designation" value="Gfi1"/>
</dbReference>
<dbReference type="eggNOG" id="KOG1721">
    <property type="taxonomic scope" value="Eukaryota"/>
</dbReference>
<dbReference type="InParanoid" id="P70338"/>
<dbReference type="OrthoDB" id="6155966at2759"/>
<dbReference type="TreeFam" id="TF350784"/>
<dbReference type="BioGRID-ORCS" id="14581">
    <property type="hits" value="3 hits in 83 CRISPR screens"/>
</dbReference>
<dbReference type="PRO" id="PR:P70338"/>
<dbReference type="Proteomes" id="UP000000589">
    <property type="component" value="Unplaced"/>
</dbReference>
<dbReference type="RNAct" id="P70338">
    <property type="molecule type" value="protein"/>
</dbReference>
<dbReference type="GO" id="GO:0005654">
    <property type="term" value="C:nucleoplasm"/>
    <property type="evidence" value="ECO:0000304"/>
    <property type="project" value="Reactome"/>
</dbReference>
<dbReference type="GO" id="GO:0017053">
    <property type="term" value="C:transcription repressor complex"/>
    <property type="evidence" value="ECO:0000250"/>
    <property type="project" value="UniProtKB"/>
</dbReference>
<dbReference type="GO" id="GO:0003677">
    <property type="term" value="F:DNA binding"/>
    <property type="evidence" value="ECO:0007669"/>
    <property type="project" value="UniProtKB-KW"/>
</dbReference>
<dbReference type="GO" id="GO:0001217">
    <property type="term" value="F:DNA-binding transcription repressor activity"/>
    <property type="evidence" value="ECO:0000314"/>
    <property type="project" value="GO_Central"/>
</dbReference>
<dbReference type="GO" id="GO:0140767">
    <property type="term" value="F:enzyme-substrate adaptor activity"/>
    <property type="evidence" value="ECO:0000250"/>
    <property type="project" value="UniProtKB"/>
</dbReference>
<dbReference type="GO" id="GO:0008270">
    <property type="term" value="F:zinc ion binding"/>
    <property type="evidence" value="ECO:0007669"/>
    <property type="project" value="UniProtKB-KW"/>
</dbReference>
<dbReference type="GO" id="GO:0045165">
    <property type="term" value="P:cell fate commitment"/>
    <property type="evidence" value="ECO:0000315"/>
    <property type="project" value="MGI"/>
</dbReference>
<dbReference type="GO" id="GO:0001708">
    <property type="term" value="P:cell fate specification"/>
    <property type="evidence" value="ECO:0000315"/>
    <property type="project" value="MGI"/>
</dbReference>
<dbReference type="GO" id="GO:0071222">
    <property type="term" value="P:cellular response to lipopolysaccharide"/>
    <property type="evidence" value="ECO:0000270"/>
    <property type="project" value="UniProtKB"/>
</dbReference>
<dbReference type="GO" id="GO:0006974">
    <property type="term" value="P:DNA damage response"/>
    <property type="evidence" value="ECO:0000250"/>
    <property type="project" value="UniProtKB"/>
</dbReference>
<dbReference type="GO" id="GO:0042491">
    <property type="term" value="P:inner ear auditory receptor cell differentiation"/>
    <property type="evidence" value="ECO:0000315"/>
    <property type="project" value="MGI"/>
</dbReference>
<dbReference type="GO" id="GO:0042472">
    <property type="term" value="P:inner ear morphogenesis"/>
    <property type="evidence" value="ECO:0000315"/>
    <property type="project" value="MGI"/>
</dbReference>
<dbReference type="GO" id="GO:0007638">
    <property type="term" value="P:mechanosensory behavior"/>
    <property type="evidence" value="ECO:0000315"/>
    <property type="project" value="MGI"/>
</dbReference>
<dbReference type="GO" id="GO:0009996">
    <property type="term" value="P:negative regulation of cell fate specification"/>
    <property type="evidence" value="ECO:0000315"/>
    <property type="project" value="MGI"/>
</dbReference>
<dbReference type="GO" id="GO:0010977">
    <property type="term" value="P:negative regulation of neuron projection development"/>
    <property type="evidence" value="ECO:0000250"/>
    <property type="project" value="UniProtKB"/>
</dbReference>
<dbReference type="GO" id="GO:0032088">
    <property type="term" value="P:negative regulation of NF-kappaB transcription factor activity"/>
    <property type="evidence" value="ECO:0000315"/>
    <property type="project" value="UniProtKB"/>
</dbReference>
<dbReference type="GO" id="GO:0000122">
    <property type="term" value="P:negative regulation of transcription by RNA polymerase II"/>
    <property type="evidence" value="ECO:0000315"/>
    <property type="project" value="UniProtKB"/>
</dbReference>
<dbReference type="GO" id="GO:0042660">
    <property type="term" value="P:positive regulation of cell fate specification"/>
    <property type="evidence" value="ECO:0000315"/>
    <property type="project" value="MGI"/>
</dbReference>
<dbReference type="FunFam" id="3.30.160.60:FF:000489">
    <property type="entry name" value="Zinc finger protein Gfi-1"/>
    <property type="match status" value="1"/>
</dbReference>
<dbReference type="FunFam" id="3.30.160.60:FF:000827">
    <property type="entry name" value="Zinc finger protein Gfi-1"/>
    <property type="match status" value="1"/>
</dbReference>
<dbReference type="FunFam" id="3.30.160.60:FF:000148">
    <property type="entry name" value="zinc finger protein Gfi-1"/>
    <property type="match status" value="1"/>
</dbReference>
<dbReference type="FunFam" id="3.30.160.60:FF:000245">
    <property type="entry name" value="zinc finger protein Gfi-1"/>
    <property type="match status" value="1"/>
</dbReference>
<dbReference type="FunFam" id="3.30.160.60:FF:000208">
    <property type="entry name" value="zinc finger protein Gfi-1b"/>
    <property type="match status" value="1"/>
</dbReference>
<dbReference type="FunFam" id="3.30.160.60:FF:000432">
    <property type="entry name" value="zinc finger protein Gfi-1b isoform X1"/>
    <property type="match status" value="1"/>
</dbReference>
<dbReference type="Gene3D" id="3.30.160.60">
    <property type="entry name" value="Classic Zinc Finger"/>
    <property type="match status" value="6"/>
</dbReference>
<dbReference type="InterPro" id="IPR050717">
    <property type="entry name" value="C2H2-ZF_Transcription_Reg"/>
</dbReference>
<dbReference type="InterPro" id="IPR036236">
    <property type="entry name" value="Znf_C2H2_sf"/>
</dbReference>
<dbReference type="InterPro" id="IPR013087">
    <property type="entry name" value="Znf_C2H2_type"/>
</dbReference>
<dbReference type="PANTHER" id="PTHR14196">
    <property type="entry name" value="ODD-SKIPPED - RELATED"/>
    <property type="match status" value="1"/>
</dbReference>
<dbReference type="PANTHER" id="PTHR14196:SF12">
    <property type="entry name" value="ZINC FINGER PROTEIN 208-LIKE"/>
    <property type="match status" value="1"/>
</dbReference>
<dbReference type="Pfam" id="PF00096">
    <property type="entry name" value="zf-C2H2"/>
    <property type="match status" value="6"/>
</dbReference>
<dbReference type="SMART" id="SM00355">
    <property type="entry name" value="ZnF_C2H2"/>
    <property type="match status" value="6"/>
</dbReference>
<dbReference type="SUPFAM" id="SSF57667">
    <property type="entry name" value="beta-beta-alpha zinc fingers"/>
    <property type="match status" value="3"/>
</dbReference>
<dbReference type="PROSITE" id="PS00028">
    <property type="entry name" value="ZINC_FINGER_C2H2_1"/>
    <property type="match status" value="6"/>
</dbReference>
<dbReference type="PROSITE" id="PS50157">
    <property type="entry name" value="ZINC_FINGER_C2H2_2"/>
    <property type="match status" value="6"/>
</dbReference>
<sequence>MPRSFLVKSKKAHSYHQPRSPGPDYSLRLETVPAPGRAEGGAVSAGESKMEPRERLSPDSQLTEAPDRASASPNSCEGSVCDPCSEFEDFWRPPSPSVSPASEKSLCRSLDEAQPYTLPFKPYAWSGLAGSDLRHLVQSYRQCSALERSAGLSLFCERGSEPGRPAARYGPEQAAGGAGAGQPGRCGVAGGATSAAGLGLYGDFAPAAAGLYERPSTAAGRLYQDHGHELHADKSVGVKVESELLCTRLLLGGGSYKCIKCSKVFSTPHGLEVHVRRSHSGTRPFACEMCGKTFGHAVSLEQHKAVHSQERSFDCKICGKSFKRSSTLSTHLLIHSDTRPYPCQYCGKRFHQKSDMKKHTFIHTGEKPHKCQVCGKAFSQSSNLITHSRKHTGFKPFGCDLCGKGFQRKVDLRRHRETQHGLK</sequence>
<organism>
    <name type="scientific">Mus musculus</name>
    <name type="common">Mouse</name>
    <dbReference type="NCBI Taxonomy" id="10090"/>
    <lineage>
        <taxon>Eukaryota</taxon>
        <taxon>Metazoa</taxon>
        <taxon>Chordata</taxon>
        <taxon>Craniata</taxon>
        <taxon>Vertebrata</taxon>
        <taxon>Euteleostomi</taxon>
        <taxon>Mammalia</taxon>
        <taxon>Eutheria</taxon>
        <taxon>Euarchontoglires</taxon>
        <taxon>Glires</taxon>
        <taxon>Rodentia</taxon>
        <taxon>Myomorpha</taxon>
        <taxon>Muroidea</taxon>
        <taxon>Muridae</taxon>
        <taxon>Murinae</taxon>
        <taxon>Mus</taxon>
        <taxon>Mus</taxon>
    </lineage>
</organism>
<evidence type="ECO:0000250" key="1"/>
<evidence type="ECO:0000250" key="2">
    <source>
        <dbReference type="UniProtKB" id="Q07120"/>
    </source>
</evidence>
<evidence type="ECO:0000250" key="3">
    <source>
        <dbReference type="UniProtKB" id="Q99684"/>
    </source>
</evidence>
<evidence type="ECO:0000255" key="4">
    <source>
        <dbReference type="PROSITE-ProRule" id="PRU00042"/>
    </source>
</evidence>
<evidence type="ECO:0000256" key="5">
    <source>
        <dbReference type="SAM" id="MobiDB-lite"/>
    </source>
</evidence>
<evidence type="ECO:0000269" key="6">
    <source>
    </source>
</evidence>
<evidence type="ECO:0000269" key="7">
    <source>
    </source>
</evidence>
<evidence type="ECO:0000269" key="8">
    <source>
    </source>
</evidence>
<evidence type="ECO:0000269" key="9">
    <source>
    </source>
</evidence>
<evidence type="ECO:0000269" key="10">
    <source>
    </source>
</evidence>
<evidence type="ECO:0000269" key="11">
    <source>
    </source>
</evidence>
<evidence type="ECO:0000269" key="12">
    <source>
    </source>
</evidence>
<evidence type="ECO:0000269" key="13">
    <source>
    </source>
</evidence>
<evidence type="ECO:0000305" key="14"/>
<protein>
    <recommendedName>
        <fullName>Zinc finger protein Gfi-1</fullName>
    </recommendedName>
    <alternativeName>
        <fullName>Growth factor independent protein 1</fullName>
    </alternativeName>
</protein>